<accession>O98766</accession>
<dbReference type="EC" id="7.1.2.2" evidence="1"/>
<dbReference type="EMBL" id="U86383">
    <property type="protein sequence ID" value="AAD00585.1"/>
    <property type="molecule type" value="Genomic_DNA"/>
</dbReference>
<dbReference type="GO" id="GO:0009535">
    <property type="term" value="C:chloroplast thylakoid membrane"/>
    <property type="evidence" value="ECO:0007669"/>
    <property type="project" value="UniProtKB-SubCell"/>
</dbReference>
<dbReference type="GO" id="GO:0005739">
    <property type="term" value="C:mitochondrion"/>
    <property type="evidence" value="ECO:0007669"/>
    <property type="project" value="GOC"/>
</dbReference>
<dbReference type="GO" id="GO:0045259">
    <property type="term" value="C:proton-transporting ATP synthase complex"/>
    <property type="evidence" value="ECO:0007669"/>
    <property type="project" value="UniProtKB-KW"/>
</dbReference>
<dbReference type="GO" id="GO:0005524">
    <property type="term" value="F:ATP binding"/>
    <property type="evidence" value="ECO:0007669"/>
    <property type="project" value="UniProtKB-UniRule"/>
</dbReference>
<dbReference type="GO" id="GO:0016887">
    <property type="term" value="F:ATP hydrolysis activity"/>
    <property type="evidence" value="ECO:0007669"/>
    <property type="project" value="InterPro"/>
</dbReference>
<dbReference type="GO" id="GO:0046933">
    <property type="term" value="F:proton-transporting ATP synthase activity, rotational mechanism"/>
    <property type="evidence" value="ECO:0007669"/>
    <property type="project" value="UniProtKB-UniRule"/>
</dbReference>
<dbReference type="GO" id="GO:0042776">
    <property type="term" value="P:proton motive force-driven mitochondrial ATP synthesis"/>
    <property type="evidence" value="ECO:0007669"/>
    <property type="project" value="TreeGrafter"/>
</dbReference>
<dbReference type="CDD" id="cd18110">
    <property type="entry name" value="ATP-synt_F1_beta_C"/>
    <property type="match status" value="1"/>
</dbReference>
<dbReference type="CDD" id="cd18115">
    <property type="entry name" value="ATP-synt_F1_beta_N"/>
    <property type="match status" value="1"/>
</dbReference>
<dbReference type="CDD" id="cd01133">
    <property type="entry name" value="F1-ATPase_beta_CD"/>
    <property type="match status" value="1"/>
</dbReference>
<dbReference type="FunFam" id="1.10.1140.10:FF:000001">
    <property type="entry name" value="ATP synthase subunit beta"/>
    <property type="match status" value="1"/>
</dbReference>
<dbReference type="FunFam" id="3.40.50.12240:FF:000006">
    <property type="entry name" value="ATP synthase subunit beta"/>
    <property type="match status" value="1"/>
</dbReference>
<dbReference type="FunFam" id="3.40.50.300:FF:000004">
    <property type="entry name" value="ATP synthase subunit beta"/>
    <property type="match status" value="1"/>
</dbReference>
<dbReference type="FunFam" id="2.40.10.170:FF:000002">
    <property type="entry name" value="ATP synthase subunit beta, chloroplastic"/>
    <property type="match status" value="1"/>
</dbReference>
<dbReference type="Gene3D" id="2.40.10.170">
    <property type="match status" value="1"/>
</dbReference>
<dbReference type="Gene3D" id="1.10.1140.10">
    <property type="entry name" value="Bovine Mitochondrial F1-atpase, Atp Synthase Beta Chain, Chain D, domain 3"/>
    <property type="match status" value="1"/>
</dbReference>
<dbReference type="Gene3D" id="3.40.50.300">
    <property type="entry name" value="P-loop containing nucleotide triphosphate hydrolases"/>
    <property type="match status" value="1"/>
</dbReference>
<dbReference type="HAMAP" id="MF_01347">
    <property type="entry name" value="ATP_synth_beta_bact"/>
    <property type="match status" value="1"/>
</dbReference>
<dbReference type="InterPro" id="IPR003593">
    <property type="entry name" value="AAA+_ATPase"/>
</dbReference>
<dbReference type="InterPro" id="IPR055190">
    <property type="entry name" value="ATP-synt_VA_C"/>
</dbReference>
<dbReference type="InterPro" id="IPR005722">
    <property type="entry name" value="ATP_synth_F1_bsu"/>
</dbReference>
<dbReference type="InterPro" id="IPR020003">
    <property type="entry name" value="ATPase_a/bsu_AS"/>
</dbReference>
<dbReference type="InterPro" id="IPR050053">
    <property type="entry name" value="ATPase_alpha/beta_chains"/>
</dbReference>
<dbReference type="InterPro" id="IPR004100">
    <property type="entry name" value="ATPase_F1/V1/A1_a/bsu_N"/>
</dbReference>
<dbReference type="InterPro" id="IPR036121">
    <property type="entry name" value="ATPase_F1/V1/A1_a/bsu_N_sf"/>
</dbReference>
<dbReference type="InterPro" id="IPR000194">
    <property type="entry name" value="ATPase_F1/V1/A1_a/bsu_nucl-bd"/>
</dbReference>
<dbReference type="InterPro" id="IPR024034">
    <property type="entry name" value="ATPase_F1/V1_b/a_C"/>
</dbReference>
<dbReference type="InterPro" id="IPR027417">
    <property type="entry name" value="P-loop_NTPase"/>
</dbReference>
<dbReference type="NCBIfam" id="TIGR01039">
    <property type="entry name" value="atpD"/>
    <property type="match status" value="1"/>
</dbReference>
<dbReference type="PANTHER" id="PTHR15184">
    <property type="entry name" value="ATP SYNTHASE"/>
    <property type="match status" value="1"/>
</dbReference>
<dbReference type="PANTHER" id="PTHR15184:SF71">
    <property type="entry name" value="ATP SYNTHASE SUBUNIT BETA, MITOCHONDRIAL"/>
    <property type="match status" value="1"/>
</dbReference>
<dbReference type="Pfam" id="PF00006">
    <property type="entry name" value="ATP-synt_ab"/>
    <property type="match status" value="1"/>
</dbReference>
<dbReference type="Pfam" id="PF02874">
    <property type="entry name" value="ATP-synt_ab_N"/>
    <property type="match status" value="1"/>
</dbReference>
<dbReference type="Pfam" id="PF22919">
    <property type="entry name" value="ATP-synt_VA_C"/>
    <property type="match status" value="1"/>
</dbReference>
<dbReference type="SMART" id="SM00382">
    <property type="entry name" value="AAA"/>
    <property type="match status" value="1"/>
</dbReference>
<dbReference type="SUPFAM" id="SSF47917">
    <property type="entry name" value="C-terminal domain of alpha and beta subunits of F1 ATP synthase"/>
    <property type="match status" value="1"/>
</dbReference>
<dbReference type="SUPFAM" id="SSF50615">
    <property type="entry name" value="N-terminal domain of alpha and beta subunits of F1 ATP synthase"/>
    <property type="match status" value="1"/>
</dbReference>
<dbReference type="SUPFAM" id="SSF52540">
    <property type="entry name" value="P-loop containing nucleoside triphosphate hydrolases"/>
    <property type="match status" value="1"/>
</dbReference>
<dbReference type="PROSITE" id="PS00152">
    <property type="entry name" value="ATPASE_ALPHA_BETA"/>
    <property type="match status" value="1"/>
</dbReference>
<gene>
    <name evidence="1" type="primary">atpB</name>
</gene>
<comment type="function">
    <text evidence="1">Produces ATP from ADP in the presence of a proton gradient across the membrane. The catalytic sites are hosted primarily by the beta subunits.</text>
</comment>
<comment type="catalytic activity">
    <reaction evidence="1">
        <text>ATP + H2O + 4 H(+)(in) = ADP + phosphate + 5 H(+)(out)</text>
        <dbReference type="Rhea" id="RHEA:57720"/>
        <dbReference type="ChEBI" id="CHEBI:15377"/>
        <dbReference type="ChEBI" id="CHEBI:15378"/>
        <dbReference type="ChEBI" id="CHEBI:30616"/>
        <dbReference type="ChEBI" id="CHEBI:43474"/>
        <dbReference type="ChEBI" id="CHEBI:456216"/>
        <dbReference type="EC" id="7.1.2.2"/>
    </reaction>
</comment>
<comment type="subunit">
    <text evidence="1">F-type ATPases have 2 components, CF(1) - the catalytic core - and CF(0) - the membrane proton channel. CF(1) has five subunits: alpha(3), beta(3), gamma(1), delta(1), epsilon(1). CF(0) has four main subunits: a(1), b(1), b'(1) and c(9-12).</text>
</comment>
<comment type="subcellular location">
    <subcellularLocation>
        <location evidence="1">Plastid</location>
        <location evidence="1">Chloroplast thylakoid membrane</location>
        <topology evidence="1">Peripheral membrane protein</topology>
    </subcellularLocation>
</comment>
<comment type="similarity">
    <text evidence="1">Belongs to the ATPase alpha/beta chains family.</text>
</comment>
<geneLocation type="chloroplast"/>
<feature type="chain" id="PRO_0000254443" description="ATP synthase subunit beta, chloroplastic">
    <location>
        <begin position="1"/>
        <end position="498"/>
    </location>
</feature>
<feature type="binding site" evidence="1">
    <location>
        <begin position="172"/>
        <end position="179"/>
    </location>
    <ligand>
        <name>ATP</name>
        <dbReference type="ChEBI" id="CHEBI:30616"/>
    </ligand>
</feature>
<organism>
    <name type="scientific">Asarum canadense</name>
    <name type="common">Wild ginger</name>
    <dbReference type="NCBI Taxonomy" id="28498"/>
    <lineage>
        <taxon>Eukaryota</taxon>
        <taxon>Viridiplantae</taxon>
        <taxon>Streptophyta</taxon>
        <taxon>Embryophyta</taxon>
        <taxon>Tracheophyta</taxon>
        <taxon>Spermatophyta</taxon>
        <taxon>Magnoliopsida</taxon>
        <taxon>Magnoliidae</taxon>
        <taxon>Piperales</taxon>
        <taxon>Asaraceae</taxon>
        <taxon>Asarum</taxon>
    </lineage>
</organism>
<evidence type="ECO:0000255" key="1">
    <source>
        <dbReference type="HAMAP-Rule" id="MF_01347"/>
    </source>
</evidence>
<name>ATPB_ASACA</name>
<keyword id="KW-0066">ATP synthesis</keyword>
<keyword id="KW-0067">ATP-binding</keyword>
<keyword id="KW-0139">CF(1)</keyword>
<keyword id="KW-0150">Chloroplast</keyword>
<keyword id="KW-0375">Hydrogen ion transport</keyword>
<keyword id="KW-0406">Ion transport</keyword>
<keyword id="KW-0472">Membrane</keyword>
<keyword id="KW-0547">Nucleotide-binding</keyword>
<keyword id="KW-0934">Plastid</keyword>
<keyword id="KW-0793">Thylakoid</keyword>
<keyword id="KW-1278">Translocase</keyword>
<keyword id="KW-0813">Transport</keyword>
<protein>
    <recommendedName>
        <fullName evidence="1">ATP synthase subunit beta, chloroplastic</fullName>
        <ecNumber evidence="1">7.1.2.2</ecNumber>
    </recommendedName>
    <alternativeName>
        <fullName evidence="1">ATP synthase F1 sector subunit beta</fullName>
    </alternativeName>
    <alternativeName>
        <fullName evidence="1">F-ATPase subunit beta</fullName>
    </alternativeName>
</protein>
<reference key="1">
    <citation type="journal article" date="1997" name="Syst. Bot.">
        <title>Data congruency and phylogeny of the Papaveraceae s.l. based on four data sets: atpB and rbcL sequences, trnK restriction sites, and morphological characters.</title>
        <authorList>
            <person name="Hoot S.B."/>
            <person name="Kadereit J.W."/>
            <person name="Blattner F.R."/>
            <person name="Jork K.B."/>
            <person name="Schwarzbach A.E."/>
            <person name="Crane P.R."/>
        </authorList>
        <dbReference type="AGRICOLA" id="IND21637428"/>
    </citation>
    <scope>NUCLEOTIDE SEQUENCE [GENOMIC DNA]</scope>
</reference>
<proteinExistence type="inferred from homology"/>
<sequence>MRINPTTSVPGVSTLEEKNLGRIAQIIGPVLDVAFPPGKMPNIYNALVVKGRDTVGQQINVTCEVQQLLGNNRVRTVAMSATDGLMRGMEVIDTGAPLSVPVGGATLGRIFNVLGEPVDNLGPVDTRTTSPIHRSAPAFIQLDTRLSIFETGIKVVDLLAPYRRGGKIGLFGGAGVGKTVLIMELINNIAKAHGGVSVFGGVGERTREGNDLYMEMKESGVINEQNLAESKVALVYGQXXEPPGARMRVGLTALTMAEYFRDVXEQDVLLFIDNIFRFVQAGSEVSALLGRMPSAVGYQPTLSTEMGSLQERITSTKEGSITSIQAVYVPADDLTDPAPATTFAHLDATTVLSRGLAXKGIYPAVDPLDSTSTMLQPRIVGEEHYETAQRVKQTSQRYKELQDIIAILGLDELSEEDRLTVARARKIERFLSQPFFVAEVFTGSPGKYVGLAETIRGFQLILSGELDGLPEQAFYLVGNIDEATAKAINLDEESKLKK</sequence>